<dbReference type="EMBL" id="CP000468">
    <property type="protein sequence ID" value="ABJ01944.1"/>
    <property type="molecule type" value="Genomic_DNA"/>
</dbReference>
<dbReference type="RefSeq" id="WP_001090835.1">
    <property type="nucleotide sequence ID" value="NZ_CADILS010000012.1"/>
</dbReference>
<dbReference type="SMR" id="A1AE54"/>
<dbReference type="KEGG" id="ecv:APECO1_4008"/>
<dbReference type="HOGENOM" id="CLU_047530_3_1_6"/>
<dbReference type="Proteomes" id="UP000008216">
    <property type="component" value="Chromosome"/>
</dbReference>
<dbReference type="GO" id="GO:0005886">
    <property type="term" value="C:plasma membrane"/>
    <property type="evidence" value="ECO:0007669"/>
    <property type="project" value="UniProtKB-SubCell"/>
</dbReference>
<dbReference type="GO" id="GO:0003677">
    <property type="term" value="F:DNA binding"/>
    <property type="evidence" value="ECO:0007669"/>
    <property type="project" value="UniProtKB-KW"/>
</dbReference>
<dbReference type="GO" id="GO:0008360">
    <property type="term" value="P:regulation of cell shape"/>
    <property type="evidence" value="ECO:0007669"/>
    <property type="project" value="UniProtKB-UniRule"/>
</dbReference>
<dbReference type="CDD" id="cd00093">
    <property type="entry name" value="HTH_XRE"/>
    <property type="match status" value="1"/>
</dbReference>
<dbReference type="FunFam" id="1.10.260.40:FF:000014">
    <property type="entry name" value="Cytoskeleton protein RodZ"/>
    <property type="match status" value="1"/>
</dbReference>
<dbReference type="Gene3D" id="1.10.260.40">
    <property type="entry name" value="lambda repressor-like DNA-binding domains"/>
    <property type="match status" value="1"/>
</dbReference>
<dbReference type="HAMAP" id="MF_02017">
    <property type="entry name" value="RodZ"/>
    <property type="match status" value="1"/>
</dbReference>
<dbReference type="InterPro" id="IPR050400">
    <property type="entry name" value="Bact_Cytoskel_RodZ"/>
</dbReference>
<dbReference type="InterPro" id="IPR001387">
    <property type="entry name" value="Cro/C1-type_HTH"/>
</dbReference>
<dbReference type="InterPro" id="IPR010982">
    <property type="entry name" value="Lambda_DNA-bd_dom_sf"/>
</dbReference>
<dbReference type="InterPro" id="IPR023690">
    <property type="entry name" value="RodZ"/>
</dbReference>
<dbReference type="InterPro" id="IPR025194">
    <property type="entry name" value="RodZ-like_C"/>
</dbReference>
<dbReference type="NCBIfam" id="NF008109">
    <property type="entry name" value="PRK10856.1"/>
    <property type="match status" value="1"/>
</dbReference>
<dbReference type="PANTHER" id="PTHR34475">
    <property type="match status" value="1"/>
</dbReference>
<dbReference type="PANTHER" id="PTHR34475:SF1">
    <property type="entry name" value="CYTOSKELETON PROTEIN RODZ"/>
    <property type="match status" value="1"/>
</dbReference>
<dbReference type="Pfam" id="PF13413">
    <property type="entry name" value="HTH_25"/>
    <property type="match status" value="1"/>
</dbReference>
<dbReference type="Pfam" id="PF13464">
    <property type="entry name" value="RodZ_C"/>
    <property type="match status" value="1"/>
</dbReference>
<dbReference type="SMART" id="SM00530">
    <property type="entry name" value="HTH_XRE"/>
    <property type="match status" value="1"/>
</dbReference>
<dbReference type="SUPFAM" id="SSF47413">
    <property type="entry name" value="lambda repressor-like DNA-binding domains"/>
    <property type="match status" value="1"/>
</dbReference>
<dbReference type="PROSITE" id="PS50943">
    <property type="entry name" value="HTH_CROC1"/>
    <property type="match status" value="1"/>
</dbReference>
<name>RODZ_ECOK1</name>
<reference key="1">
    <citation type="journal article" date="2007" name="J. Bacteriol.">
        <title>The genome sequence of avian pathogenic Escherichia coli strain O1:K1:H7 shares strong similarities with human extraintestinal pathogenic E. coli genomes.</title>
        <authorList>
            <person name="Johnson T.J."/>
            <person name="Kariyawasam S."/>
            <person name="Wannemuehler Y."/>
            <person name="Mangiamele P."/>
            <person name="Johnson S.J."/>
            <person name="Doetkott C."/>
            <person name="Skyberg J.A."/>
            <person name="Lynne A.M."/>
            <person name="Johnson J.R."/>
            <person name="Nolan L.K."/>
        </authorList>
    </citation>
    <scope>NUCLEOTIDE SEQUENCE [LARGE SCALE GENOMIC DNA]</scope>
</reference>
<feature type="chain" id="PRO_0000361841" description="Cytoskeleton protein RodZ">
    <location>
        <begin position="1"/>
        <end position="335"/>
    </location>
</feature>
<feature type="topological domain" description="Cytoplasmic" evidence="1">
    <location>
        <begin position="1"/>
        <end position="111"/>
    </location>
</feature>
<feature type="transmembrane region" description="Helical; Signal-anchor for type II membrane protein" evidence="1">
    <location>
        <begin position="112"/>
        <end position="132"/>
    </location>
</feature>
<feature type="topological domain" description="Periplasmic" evidence="1">
    <location>
        <begin position="133"/>
        <end position="335"/>
    </location>
</feature>
<feature type="domain" description="HTH cro/C1-type" evidence="1">
    <location>
        <begin position="19"/>
        <end position="71"/>
    </location>
</feature>
<feature type="DNA-binding region" description="H-T-H motif" evidence="1">
    <location>
        <begin position="30"/>
        <end position="49"/>
    </location>
</feature>
<feature type="region of interest" description="Disordered" evidence="2">
    <location>
        <begin position="148"/>
        <end position="244"/>
    </location>
</feature>
<feature type="compositionally biased region" description="Polar residues" evidence="2">
    <location>
        <begin position="148"/>
        <end position="164"/>
    </location>
</feature>
<feature type="compositionally biased region" description="Low complexity" evidence="2">
    <location>
        <begin position="165"/>
        <end position="205"/>
    </location>
</feature>
<feature type="compositionally biased region" description="Low complexity" evidence="2">
    <location>
        <begin position="217"/>
        <end position="239"/>
    </location>
</feature>
<keyword id="KW-0997">Cell inner membrane</keyword>
<keyword id="KW-1003">Cell membrane</keyword>
<keyword id="KW-0133">Cell shape</keyword>
<keyword id="KW-0238">DNA-binding</keyword>
<keyword id="KW-0472">Membrane</keyword>
<keyword id="KW-1185">Reference proteome</keyword>
<keyword id="KW-0735">Signal-anchor</keyword>
<keyword id="KW-0812">Transmembrane</keyword>
<keyword id="KW-1133">Transmembrane helix</keyword>
<organism>
    <name type="scientific">Escherichia coli O1:K1 / APEC</name>
    <dbReference type="NCBI Taxonomy" id="405955"/>
    <lineage>
        <taxon>Bacteria</taxon>
        <taxon>Pseudomonadati</taxon>
        <taxon>Pseudomonadota</taxon>
        <taxon>Gammaproteobacteria</taxon>
        <taxon>Enterobacterales</taxon>
        <taxon>Enterobacteriaceae</taxon>
        <taxon>Escherichia</taxon>
    </lineage>
</organism>
<proteinExistence type="inferred from homology"/>
<evidence type="ECO:0000255" key="1">
    <source>
        <dbReference type="HAMAP-Rule" id="MF_02017"/>
    </source>
</evidence>
<evidence type="ECO:0000256" key="2">
    <source>
        <dbReference type="SAM" id="MobiDB-lite"/>
    </source>
</evidence>
<gene>
    <name evidence="1" type="primary">rodZ</name>
    <name type="ordered locus">Ecok1_24500</name>
    <name type="ORF">APECO1_4008</name>
</gene>
<accession>A1AE54</accession>
<sequence>MNTEATHDQNEALTTGARLRNAREQLGLSQQAVAERLCLKVSTVRDIEEDKAPADLASTFLRGYIRSYARLVHIPEEELLPGLEKQAPLRAAKVAPMQSFSLGKRRKKRDGWLMTFTWLVLFVVIGLSGAWWWQDHKAQQEEITTMADQSSAELNNNQSQSVPLDTSTTTDQAMATTPTSPVDTTATNTQTPAVTAPAPAVDPQQNAVVPPSQANVDTAATPAPAATTTPDGAAPLPTDQAGVTTPAVDPNALVMNFTADCWLEVTDATGKKLFSGMQRKDGNLNLTGQAPYKLKIGAPAAVQIQYQGKPVDLSRFIRTNQVARLTLNAEQSPAQ</sequence>
<protein>
    <recommendedName>
        <fullName evidence="1">Cytoskeleton protein RodZ</fullName>
    </recommendedName>
</protein>
<comment type="function">
    <text evidence="1">Cytoskeletal protein that is involved in cell-shape control through regulation of the length of the long axis.</text>
</comment>
<comment type="subcellular location">
    <subcellularLocation>
        <location evidence="1">Cell inner membrane</location>
        <topology evidence="1">Single-pass type II membrane protein</topology>
    </subcellularLocation>
    <text evidence="1">Forms helical filaments along the long axis of the cell.</text>
</comment>
<comment type="domain">
    <text evidence="1">The helix-turn-helix (HTH) motif in the cytoplasmic domain of the N-terminus is involved in the formation of spirals to maintain the rigid rod shape. As this protein is anchored in the cytoplasmic membrane, the HTH motif may contribute to protein-protein interactions to form the RodZ helix, which is localized beneath the cytoplasmic membrane. The C-terminal domain may be critical for determination of the rod shape by probably interacting with enzymes required for synthesis of the peptidoglycan layer, including PBPs in the periplasm.</text>
</comment>
<comment type="similarity">
    <text evidence="1">Belongs to the RodZ family.</text>
</comment>